<comment type="function">
    <text evidence="1">Antibacterial peptide active against X.axonopodis pv. glycines (MIC=42 uM). Not active against E.coli ATCC 25922, S.aureus ATCC 29313 or P.aeruginosa ATCC 27853.</text>
</comment>
<comment type="subcellular location">
    <subcellularLocation>
        <location evidence="2">Secreted</location>
    </subcellularLocation>
</comment>
<comment type="tissue specificity">
    <text evidence="6">Expressed by the skin glands.</text>
</comment>
<comment type="mass spectrometry" mass="1519.05" method="MALDI" evidence="2"/>
<comment type="similarity">
    <text evidence="5">Belongs to the frog skin active peptide (FSAP) family. Hyposin subfamily.</text>
</comment>
<protein>
    <recommendedName>
        <fullName evidence="5">Hyposin-H6</fullName>
        <shortName evidence="5">HPS-H6</shortName>
    </recommendedName>
    <alternativeName>
        <fullName evidence="3">Hyposin HA-6</fullName>
    </alternativeName>
</protein>
<accession>P86921</accession>
<dbReference type="GO" id="GO:0005576">
    <property type="term" value="C:extracellular region"/>
    <property type="evidence" value="ECO:0000314"/>
    <property type="project" value="UniProtKB"/>
</dbReference>
<dbReference type="GO" id="GO:0050829">
    <property type="term" value="P:defense response to Gram-negative bacterium"/>
    <property type="evidence" value="ECO:0000314"/>
    <property type="project" value="UniProtKB"/>
</dbReference>
<dbReference type="GO" id="GO:0031640">
    <property type="term" value="P:killing of cells of another organism"/>
    <property type="evidence" value="ECO:0000314"/>
    <property type="project" value="UniProtKB"/>
</dbReference>
<evidence type="ECO:0000269" key="1">
    <source>
    </source>
</evidence>
<evidence type="ECO:0000269" key="2">
    <source ref="1"/>
</evidence>
<evidence type="ECO:0000303" key="3">
    <source>
    </source>
</evidence>
<evidence type="ECO:0000303" key="4">
    <source ref="1"/>
</evidence>
<evidence type="ECO:0000305" key="5"/>
<evidence type="ECO:0000305" key="6">
    <source ref="1"/>
</evidence>
<keyword id="KW-0027">Amidation</keyword>
<keyword id="KW-0044">Antibiotic</keyword>
<keyword id="KW-0929">Antimicrobial</keyword>
<keyword id="KW-0903">Direct protein sequencing</keyword>
<keyword id="KW-0964">Secreted</keyword>
<reference evidence="5" key="1">
    <citation type="submission" date="2011-05" db="UniProtKB">
        <authorList>
            <person name="Silva L.R."/>
            <person name="Bloch C. Jr."/>
        </authorList>
    </citation>
    <scope>PROTEIN SEQUENCE</scope>
    <scope>SUBCELLULAR LOCATION</scope>
    <scope>MASS SPECTROMETRY</scope>
    <scope>AMIDATION AT LEU-14</scope>
    <source>
        <tissue evidence="4">Skin secretion</tissue>
    </source>
</reference>
<reference evidence="5" key="2">
    <citation type="journal article" date="2012" name="PLoS ONE">
        <title>Probing protein sequences as sources for encrypted antimicrobial peptides.</title>
        <authorList>
            <person name="Brand G.D."/>
            <person name="Magalhaes M.T."/>
            <person name="Tinoco M.L."/>
            <person name="Aragao F.J."/>
            <person name="Nicoli J."/>
            <person name="Kelly S.M."/>
            <person name="Cooper A."/>
            <person name="Bloch C. Jr."/>
        </authorList>
    </citation>
    <scope>FUNCTION</scope>
</reference>
<feature type="peptide" id="PRO_0000443549" description="Hyposin-H6" evidence="2">
    <location>
        <begin position="1"/>
        <end position="14"/>
    </location>
</feature>
<feature type="modified residue" description="Leucine amide" evidence="2">
    <location>
        <position position="14"/>
    </location>
</feature>
<sequence length="14" mass="1520">LRPAILVRVKGKGL</sequence>
<organism evidence="3">
    <name type="scientific">Pithecopus hypochondrialis</name>
    <name type="common">Orange-legged leaf frog</name>
    <name type="synonym">Phyllomedusa hypochondrialis</name>
    <dbReference type="NCBI Taxonomy" id="317381"/>
    <lineage>
        <taxon>Eukaryota</taxon>
        <taxon>Metazoa</taxon>
        <taxon>Chordata</taxon>
        <taxon>Craniata</taxon>
        <taxon>Vertebrata</taxon>
        <taxon>Euteleostomi</taxon>
        <taxon>Amphibia</taxon>
        <taxon>Batrachia</taxon>
        <taxon>Anura</taxon>
        <taxon>Neobatrachia</taxon>
        <taxon>Hyloidea</taxon>
        <taxon>Hylidae</taxon>
        <taxon>Phyllomedusinae</taxon>
        <taxon>Pithecopus</taxon>
    </lineage>
</organism>
<name>HPS6_PITHY</name>
<proteinExistence type="evidence at protein level"/>